<evidence type="ECO:0000255" key="1">
    <source>
        <dbReference type="HAMAP-Rule" id="MF_01366"/>
    </source>
</evidence>
<evidence type="ECO:0000305" key="2"/>
<keyword id="KW-0687">Ribonucleoprotein</keyword>
<keyword id="KW-0689">Ribosomal protein</keyword>
<comment type="function">
    <text evidence="1">This protein is one of the early assembly proteins of the 50S ribosomal subunit, although it is not seen to bind rRNA by itself. It is important during the early stages of 50S assembly.</text>
</comment>
<comment type="subunit">
    <text evidence="1">Part of the 50S ribosomal subunit.</text>
</comment>
<comment type="similarity">
    <text evidence="1">Belongs to the universal ribosomal protein uL13 family.</text>
</comment>
<proteinExistence type="inferred from homology"/>
<reference key="1">
    <citation type="journal article" date="2005" name="J. Bacteriol.">
        <title>Swine and poultry pathogens: the complete genome sequences of two strains of Mycoplasma hyopneumoniae and a strain of Mycoplasma synoviae.</title>
        <authorList>
            <person name="Vasconcelos A.T.R."/>
            <person name="Ferreira H.B."/>
            <person name="Bizarro C.V."/>
            <person name="Bonatto S.L."/>
            <person name="Carvalho M.O."/>
            <person name="Pinto P.M."/>
            <person name="Almeida D.F."/>
            <person name="Almeida L.G.P."/>
            <person name="Almeida R."/>
            <person name="Alves-Junior L."/>
            <person name="Assuncao E.N."/>
            <person name="Azevedo V.A.C."/>
            <person name="Bogo M.R."/>
            <person name="Brigido M.M."/>
            <person name="Brocchi M."/>
            <person name="Burity H.A."/>
            <person name="Camargo A.A."/>
            <person name="Camargo S.S."/>
            <person name="Carepo M.S."/>
            <person name="Carraro D.M."/>
            <person name="de Mattos Cascardo J.C."/>
            <person name="Castro L.A."/>
            <person name="Cavalcanti G."/>
            <person name="Chemale G."/>
            <person name="Collevatti R.G."/>
            <person name="Cunha C.W."/>
            <person name="Dallagiovanna B."/>
            <person name="Dambros B.P."/>
            <person name="Dellagostin O.A."/>
            <person name="Falcao C."/>
            <person name="Fantinatti-Garboggini F."/>
            <person name="Felipe M.S.S."/>
            <person name="Fiorentin L."/>
            <person name="Franco G.R."/>
            <person name="Freitas N.S.A."/>
            <person name="Frias D."/>
            <person name="Grangeiro T.B."/>
            <person name="Grisard E.C."/>
            <person name="Guimaraes C.T."/>
            <person name="Hungria M."/>
            <person name="Jardim S.N."/>
            <person name="Krieger M.A."/>
            <person name="Laurino J.P."/>
            <person name="Lima L.F.A."/>
            <person name="Lopes M.I."/>
            <person name="Loreto E.L.S."/>
            <person name="Madeira H.M.F."/>
            <person name="Manfio G.P."/>
            <person name="Maranhao A.Q."/>
            <person name="Martinkovics C.T."/>
            <person name="Medeiros S.R.B."/>
            <person name="Moreira M.A.M."/>
            <person name="Neiva M."/>
            <person name="Ramalho-Neto C.E."/>
            <person name="Nicolas M.F."/>
            <person name="Oliveira S.C."/>
            <person name="Paixao R.F.C."/>
            <person name="Pedrosa F.O."/>
            <person name="Pena S.D.J."/>
            <person name="Pereira M."/>
            <person name="Pereira-Ferrari L."/>
            <person name="Piffer I."/>
            <person name="Pinto L.S."/>
            <person name="Potrich D.P."/>
            <person name="Salim A.C.M."/>
            <person name="Santos F.R."/>
            <person name="Schmitt R."/>
            <person name="Schneider M.P.C."/>
            <person name="Schrank A."/>
            <person name="Schrank I.S."/>
            <person name="Schuck A.F."/>
            <person name="Seuanez H.N."/>
            <person name="Silva D.W."/>
            <person name="Silva R."/>
            <person name="Silva S.C."/>
            <person name="Soares C.M.A."/>
            <person name="Souza K.R.L."/>
            <person name="Souza R.C."/>
            <person name="Staats C.C."/>
            <person name="Steffens M.B.R."/>
            <person name="Teixeira S.M.R."/>
            <person name="Urmenyi T.P."/>
            <person name="Vainstein M.H."/>
            <person name="Zuccherato L.W."/>
            <person name="Simpson A.J.G."/>
            <person name="Zaha A."/>
        </authorList>
    </citation>
    <scope>NUCLEOTIDE SEQUENCE [LARGE SCALE GENOMIC DNA]</scope>
    <source>
        <strain>J / ATCC 25934 / NCTC 10110</strain>
    </source>
</reference>
<dbReference type="EMBL" id="AE017243">
    <property type="protein sequence ID" value="AAZ44734.1"/>
    <property type="molecule type" value="Genomic_DNA"/>
</dbReference>
<dbReference type="RefSeq" id="WP_011284373.1">
    <property type="nucleotide sequence ID" value="NC_007295.1"/>
</dbReference>
<dbReference type="SMR" id="Q4A937"/>
<dbReference type="GeneID" id="41334954"/>
<dbReference type="KEGG" id="mhj:MHJ_0651"/>
<dbReference type="eggNOG" id="COG0102">
    <property type="taxonomic scope" value="Bacteria"/>
</dbReference>
<dbReference type="HOGENOM" id="CLU_082184_2_2_14"/>
<dbReference type="OrthoDB" id="9801330at2"/>
<dbReference type="Proteomes" id="UP000000548">
    <property type="component" value="Chromosome"/>
</dbReference>
<dbReference type="GO" id="GO:0022625">
    <property type="term" value="C:cytosolic large ribosomal subunit"/>
    <property type="evidence" value="ECO:0007669"/>
    <property type="project" value="TreeGrafter"/>
</dbReference>
<dbReference type="GO" id="GO:0003729">
    <property type="term" value="F:mRNA binding"/>
    <property type="evidence" value="ECO:0007669"/>
    <property type="project" value="TreeGrafter"/>
</dbReference>
<dbReference type="GO" id="GO:0003735">
    <property type="term" value="F:structural constituent of ribosome"/>
    <property type="evidence" value="ECO:0007669"/>
    <property type="project" value="InterPro"/>
</dbReference>
<dbReference type="GO" id="GO:0017148">
    <property type="term" value="P:negative regulation of translation"/>
    <property type="evidence" value="ECO:0007669"/>
    <property type="project" value="TreeGrafter"/>
</dbReference>
<dbReference type="GO" id="GO:0006412">
    <property type="term" value="P:translation"/>
    <property type="evidence" value="ECO:0007669"/>
    <property type="project" value="UniProtKB-UniRule"/>
</dbReference>
<dbReference type="CDD" id="cd00392">
    <property type="entry name" value="Ribosomal_L13"/>
    <property type="match status" value="1"/>
</dbReference>
<dbReference type="Gene3D" id="3.90.1180.10">
    <property type="entry name" value="Ribosomal protein L13"/>
    <property type="match status" value="1"/>
</dbReference>
<dbReference type="HAMAP" id="MF_01366">
    <property type="entry name" value="Ribosomal_uL13"/>
    <property type="match status" value="1"/>
</dbReference>
<dbReference type="InterPro" id="IPR005822">
    <property type="entry name" value="Ribosomal_uL13"/>
</dbReference>
<dbReference type="InterPro" id="IPR005823">
    <property type="entry name" value="Ribosomal_uL13_bac-type"/>
</dbReference>
<dbReference type="InterPro" id="IPR036899">
    <property type="entry name" value="Ribosomal_uL13_sf"/>
</dbReference>
<dbReference type="NCBIfam" id="TIGR01066">
    <property type="entry name" value="rplM_bact"/>
    <property type="match status" value="1"/>
</dbReference>
<dbReference type="PANTHER" id="PTHR11545:SF2">
    <property type="entry name" value="LARGE RIBOSOMAL SUBUNIT PROTEIN UL13M"/>
    <property type="match status" value="1"/>
</dbReference>
<dbReference type="PANTHER" id="PTHR11545">
    <property type="entry name" value="RIBOSOMAL PROTEIN L13"/>
    <property type="match status" value="1"/>
</dbReference>
<dbReference type="Pfam" id="PF00572">
    <property type="entry name" value="Ribosomal_L13"/>
    <property type="match status" value="1"/>
</dbReference>
<dbReference type="PIRSF" id="PIRSF002181">
    <property type="entry name" value="Ribosomal_L13"/>
    <property type="match status" value="1"/>
</dbReference>
<dbReference type="SUPFAM" id="SSF52161">
    <property type="entry name" value="Ribosomal protein L13"/>
    <property type="match status" value="1"/>
</dbReference>
<protein>
    <recommendedName>
        <fullName evidence="1">Large ribosomal subunit protein uL13</fullName>
    </recommendedName>
    <alternativeName>
        <fullName evidence="2">50S ribosomal protein L13</fullName>
    </alternativeName>
</protein>
<organism>
    <name type="scientific">Mesomycoplasma hyopneumoniae (strain J / ATCC 25934 / NCTC 10110)</name>
    <name type="common">Mycoplasma hyopneumoniae</name>
    <dbReference type="NCBI Taxonomy" id="262719"/>
    <lineage>
        <taxon>Bacteria</taxon>
        <taxon>Bacillati</taxon>
        <taxon>Mycoplasmatota</taxon>
        <taxon>Mycoplasmoidales</taxon>
        <taxon>Metamycoplasmataceae</taxon>
        <taxon>Mesomycoplasma</taxon>
    </lineage>
</organism>
<name>RL13_MESHJ</name>
<feature type="chain" id="PRO_1000055412" description="Large ribosomal subunit protein uL13">
    <location>
        <begin position="1"/>
        <end position="144"/>
    </location>
</feature>
<sequence length="144" mass="16650">MRQTTFVKHQEVKQKWFVIDAESKILGRLAAFVASRLRGKHYPHFTPNVDMGDKIIIINAEKILLTAKKEEQKLYYNHSGYPGGLRVRTAREMRAKKPIALLERAIYGMIPHTKLGDKQRKNLYVYSGSEHPHLGQNPEKLEVK</sequence>
<gene>
    <name evidence="1" type="primary">rplM</name>
    <name type="ordered locus">MHJ_0651</name>
</gene>
<accession>Q4A937</accession>